<comment type="function">
    <text evidence="1">Isomerase that catalyzes the conversion of deoxy-ribose 1-phosphate (dRib-1-P) and ribose 1-phosphate (Rib-1-P) to deoxy-ribose 5-phosphate (dRib-5-P) and ribose 5-phosphate (Rib-5-P), respectively.</text>
</comment>
<comment type="catalytic activity">
    <reaction evidence="1">
        <text>2-deoxy-alpha-D-ribose 1-phosphate = 2-deoxy-D-ribose 5-phosphate</text>
        <dbReference type="Rhea" id="RHEA:27658"/>
        <dbReference type="ChEBI" id="CHEBI:57259"/>
        <dbReference type="ChEBI" id="CHEBI:62877"/>
        <dbReference type="EC" id="5.4.2.7"/>
    </reaction>
</comment>
<comment type="catalytic activity">
    <reaction evidence="1">
        <text>alpha-D-ribose 1-phosphate = D-ribose 5-phosphate</text>
        <dbReference type="Rhea" id="RHEA:18793"/>
        <dbReference type="ChEBI" id="CHEBI:57720"/>
        <dbReference type="ChEBI" id="CHEBI:78346"/>
        <dbReference type="EC" id="5.4.2.7"/>
    </reaction>
</comment>
<comment type="cofactor">
    <cofactor evidence="1">
        <name>Mn(2+)</name>
        <dbReference type="ChEBI" id="CHEBI:29035"/>
    </cofactor>
    <text evidence="1">Binds 2 manganese ions.</text>
</comment>
<comment type="pathway">
    <text evidence="1">Carbohydrate degradation; 2-deoxy-D-ribose 1-phosphate degradation; D-glyceraldehyde 3-phosphate and acetaldehyde from 2-deoxy-alpha-D-ribose 1-phosphate: step 1/2.</text>
</comment>
<comment type="subcellular location">
    <subcellularLocation>
        <location evidence="1">Cytoplasm</location>
    </subcellularLocation>
</comment>
<comment type="similarity">
    <text evidence="1">Belongs to the phosphopentomutase family.</text>
</comment>
<feature type="chain" id="PRO_1000046386" description="Phosphopentomutase">
    <location>
        <begin position="1"/>
        <end position="407"/>
    </location>
</feature>
<feature type="binding site" evidence="1">
    <location>
        <position position="10"/>
    </location>
    <ligand>
        <name>Mn(2+)</name>
        <dbReference type="ChEBI" id="CHEBI:29035"/>
        <label>1</label>
    </ligand>
</feature>
<feature type="binding site" evidence="1">
    <location>
        <position position="306"/>
    </location>
    <ligand>
        <name>Mn(2+)</name>
        <dbReference type="ChEBI" id="CHEBI:29035"/>
        <label>2</label>
    </ligand>
</feature>
<feature type="binding site" evidence="1">
    <location>
        <position position="311"/>
    </location>
    <ligand>
        <name>Mn(2+)</name>
        <dbReference type="ChEBI" id="CHEBI:29035"/>
        <label>2</label>
    </ligand>
</feature>
<feature type="binding site" evidence="1">
    <location>
        <position position="347"/>
    </location>
    <ligand>
        <name>Mn(2+)</name>
        <dbReference type="ChEBI" id="CHEBI:29035"/>
        <label>1</label>
    </ligand>
</feature>
<feature type="binding site" evidence="1">
    <location>
        <position position="348"/>
    </location>
    <ligand>
        <name>Mn(2+)</name>
        <dbReference type="ChEBI" id="CHEBI:29035"/>
        <label>1</label>
    </ligand>
</feature>
<feature type="binding site" evidence="1">
    <location>
        <position position="359"/>
    </location>
    <ligand>
        <name>Mn(2+)</name>
        <dbReference type="ChEBI" id="CHEBI:29035"/>
        <label>2</label>
    </ligand>
</feature>
<proteinExistence type="inferred from homology"/>
<protein>
    <recommendedName>
        <fullName evidence="1">Phosphopentomutase</fullName>
        <ecNumber evidence="1">5.4.2.7</ecNumber>
    </recommendedName>
    <alternativeName>
        <fullName evidence="1">Phosphodeoxyribomutase</fullName>
    </alternativeName>
</protein>
<dbReference type="EC" id="5.4.2.7" evidence="1"/>
<dbReference type="EMBL" id="CP000783">
    <property type="protein sequence ID" value="ABU78589.1"/>
    <property type="molecule type" value="Genomic_DNA"/>
</dbReference>
<dbReference type="RefSeq" id="WP_007847056.1">
    <property type="nucleotide sequence ID" value="NC_009778.1"/>
</dbReference>
<dbReference type="SMR" id="A7MGA8"/>
<dbReference type="GeneID" id="56732048"/>
<dbReference type="KEGG" id="esa:ESA_03368"/>
<dbReference type="HOGENOM" id="CLU_053861_0_0_6"/>
<dbReference type="UniPathway" id="UPA00002">
    <property type="reaction ID" value="UER00467"/>
</dbReference>
<dbReference type="Proteomes" id="UP000000260">
    <property type="component" value="Chromosome"/>
</dbReference>
<dbReference type="GO" id="GO:0005829">
    <property type="term" value="C:cytosol"/>
    <property type="evidence" value="ECO:0007669"/>
    <property type="project" value="TreeGrafter"/>
</dbReference>
<dbReference type="GO" id="GO:0000287">
    <property type="term" value="F:magnesium ion binding"/>
    <property type="evidence" value="ECO:0007669"/>
    <property type="project" value="InterPro"/>
</dbReference>
<dbReference type="GO" id="GO:0030145">
    <property type="term" value="F:manganese ion binding"/>
    <property type="evidence" value="ECO:0007669"/>
    <property type="project" value="UniProtKB-UniRule"/>
</dbReference>
<dbReference type="GO" id="GO:0008973">
    <property type="term" value="F:phosphopentomutase activity"/>
    <property type="evidence" value="ECO:0007669"/>
    <property type="project" value="UniProtKB-UniRule"/>
</dbReference>
<dbReference type="GO" id="GO:0006018">
    <property type="term" value="P:2-deoxyribose 1-phosphate catabolic process"/>
    <property type="evidence" value="ECO:0007669"/>
    <property type="project" value="UniProtKB-UniRule"/>
</dbReference>
<dbReference type="GO" id="GO:0006015">
    <property type="term" value="P:5-phosphoribose 1-diphosphate biosynthetic process"/>
    <property type="evidence" value="ECO:0007669"/>
    <property type="project" value="UniProtKB-UniPathway"/>
</dbReference>
<dbReference type="GO" id="GO:0043094">
    <property type="term" value="P:metabolic compound salvage"/>
    <property type="evidence" value="ECO:0007669"/>
    <property type="project" value="InterPro"/>
</dbReference>
<dbReference type="GO" id="GO:0009117">
    <property type="term" value="P:nucleotide metabolic process"/>
    <property type="evidence" value="ECO:0007669"/>
    <property type="project" value="InterPro"/>
</dbReference>
<dbReference type="CDD" id="cd16009">
    <property type="entry name" value="PPM"/>
    <property type="match status" value="1"/>
</dbReference>
<dbReference type="FunFam" id="3.30.70.1250:FF:000001">
    <property type="entry name" value="Phosphopentomutase"/>
    <property type="match status" value="1"/>
</dbReference>
<dbReference type="Gene3D" id="3.40.720.10">
    <property type="entry name" value="Alkaline Phosphatase, subunit A"/>
    <property type="match status" value="1"/>
</dbReference>
<dbReference type="Gene3D" id="3.30.70.1250">
    <property type="entry name" value="Phosphopentomutase"/>
    <property type="match status" value="1"/>
</dbReference>
<dbReference type="HAMAP" id="MF_00740">
    <property type="entry name" value="Phosphopentomut"/>
    <property type="match status" value="1"/>
</dbReference>
<dbReference type="InterPro" id="IPR017850">
    <property type="entry name" value="Alkaline_phosphatase_core_sf"/>
</dbReference>
<dbReference type="InterPro" id="IPR010045">
    <property type="entry name" value="DeoB"/>
</dbReference>
<dbReference type="InterPro" id="IPR006124">
    <property type="entry name" value="Metalloenzyme"/>
</dbReference>
<dbReference type="InterPro" id="IPR024052">
    <property type="entry name" value="Phosphopentomutase_DeoB_cap_sf"/>
</dbReference>
<dbReference type="NCBIfam" id="TIGR01696">
    <property type="entry name" value="deoB"/>
    <property type="match status" value="1"/>
</dbReference>
<dbReference type="NCBIfam" id="NF003766">
    <property type="entry name" value="PRK05362.1"/>
    <property type="match status" value="1"/>
</dbReference>
<dbReference type="PANTHER" id="PTHR21110">
    <property type="entry name" value="PHOSPHOPENTOMUTASE"/>
    <property type="match status" value="1"/>
</dbReference>
<dbReference type="PANTHER" id="PTHR21110:SF0">
    <property type="entry name" value="PHOSPHOPENTOMUTASE"/>
    <property type="match status" value="1"/>
</dbReference>
<dbReference type="Pfam" id="PF01676">
    <property type="entry name" value="Metalloenzyme"/>
    <property type="match status" value="1"/>
</dbReference>
<dbReference type="PIRSF" id="PIRSF001491">
    <property type="entry name" value="Ppentomutase"/>
    <property type="match status" value="1"/>
</dbReference>
<dbReference type="SUPFAM" id="SSF53649">
    <property type="entry name" value="Alkaline phosphatase-like"/>
    <property type="match status" value="1"/>
</dbReference>
<dbReference type="SUPFAM" id="SSF143856">
    <property type="entry name" value="DeoB insert domain-like"/>
    <property type="match status" value="1"/>
</dbReference>
<reference key="1">
    <citation type="journal article" date="2010" name="PLoS ONE">
        <title>Genome sequence of Cronobacter sakazakii BAA-894 and comparative genomic hybridization analysis with other Cronobacter species.</title>
        <authorList>
            <person name="Kucerova E."/>
            <person name="Clifton S.W."/>
            <person name="Xia X.Q."/>
            <person name="Long F."/>
            <person name="Porwollik S."/>
            <person name="Fulton L."/>
            <person name="Fronick C."/>
            <person name="Minx P."/>
            <person name="Kyung K."/>
            <person name="Warren W."/>
            <person name="Fulton R."/>
            <person name="Feng D."/>
            <person name="Wollam A."/>
            <person name="Shah N."/>
            <person name="Bhonagiri V."/>
            <person name="Nash W.E."/>
            <person name="Hallsworth-Pepin K."/>
            <person name="Wilson R.K."/>
            <person name="McClelland M."/>
            <person name="Forsythe S.J."/>
        </authorList>
    </citation>
    <scope>NUCLEOTIDE SEQUENCE [LARGE SCALE GENOMIC DNA]</scope>
    <source>
        <strain>ATCC BAA-894</strain>
    </source>
</reference>
<organism>
    <name type="scientific">Cronobacter sakazakii (strain ATCC BAA-894)</name>
    <name type="common">Enterobacter sakazakii</name>
    <dbReference type="NCBI Taxonomy" id="290339"/>
    <lineage>
        <taxon>Bacteria</taxon>
        <taxon>Pseudomonadati</taxon>
        <taxon>Pseudomonadota</taxon>
        <taxon>Gammaproteobacteria</taxon>
        <taxon>Enterobacterales</taxon>
        <taxon>Enterobacteriaceae</taxon>
        <taxon>Cronobacter</taxon>
    </lineage>
</organism>
<accession>A7MGA8</accession>
<keyword id="KW-0963">Cytoplasm</keyword>
<keyword id="KW-0413">Isomerase</keyword>
<keyword id="KW-0464">Manganese</keyword>
<keyword id="KW-0479">Metal-binding</keyword>
<keyword id="KW-1185">Reference proteome</keyword>
<gene>
    <name evidence="1" type="primary">deoB</name>
    <name type="ordered locus">ESA_03368</name>
</gene>
<evidence type="ECO:0000255" key="1">
    <source>
        <dbReference type="HAMAP-Rule" id="MF_00740"/>
    </source>
</evidence>
<name>DEOB_CROS8</name>
<sequence length="407" mass="44264">MKRAFIMVLDSFGIGATEDAERFGDAGSDTLGHIAEACAKGEADIGRKGPLHLPNLTKLGLAKAHEGATGFIPAGMDGNAEITGAYAWAHELSSGKDTPSGHWEIAGVPVLFDWGYFTDEKNSFPQELLDKLVERANLPGYLGNCHSSGTVILDELGEEHMKTGKPIFYTSADSVFQIACHEETFGLDRLYELCEIAREELTEGGYNIGRVIARPFVGDKAGNFQRTGNRHDLAVEPPSPVVLKKLVDEKGGHVVSVGKIADIYANMGITKKVKATGLDALFDATIKEMKEAGDNTIVFTNFVDFDSSWGHRRDVAGYAAGLELFDRRLPELLELVGEDDIIIFTADHGCDPTWKGTDHTREHIPVLVYGPKVKPGSLGHRDTFADIGQTVAKYFGLSDMEYGKALF</sequence>